<accession>Q492Z0</accession>
<evidence type="ECO:0000255" key="1">
    <source>
        <dbReference type="HAMAP-Rule" id="MF_00009"/>
    </source>
</evidence>
<keyword id="KW-0963">Cytoplasm</keyword>
<keyword id="KW-0255">Endonuclease</keyword>
<keyword id="KW-0378">Hydrolase</keyword>
<keyword id="KW-0479">Metal-binding</keyword>
<keyword id="KW-0540">Nuclease</keyword>
<keyword id="KW-1185">Reference proteome</keyword>
<keyword id="KW-0690">Ribosome biogenesis</keyword>
<keyword id="KW-0698">rRNA processing</keyword>
<keyword id="KW-0862">Zinc</keyword>
<protein>
    <recommendedName>
        <fullName evidence="1">Endoribonuclease YbeY</fullName>
        <ecNumber evidence="1">3.1.-.-</ecNumber>
    </recommendedName>
</protein>
<dbReference type="EC" id="3.1.-.-" evidence="1"/>
<dbReference type="EMBL" id="CP000016">
    <property type="protein sequence ID" value="AAZ40954.1"/>
    <property type="molecule type" value="Genomic_DNA"/>
</dbReference>
<dbReference type="RefSeq" id="WP_011282861.1">
    <property type="nucleotide sequence ID" value="NC_007292.1"/>
</dbReference>
<dbReference type="SMR" id="Q492Z0"/>
<dbReference type="STRING" id="291272.BPEN_324"/>
<dbReference type="KEGG" id="bpn:BPEN_324"/>
<dbReference type="eggNOG" id="COG0319">
    <property type="taxonomic scope" value="Bacteria"/>
</dbReference>
<dbReference type="HOGENOM" id="CLU_106710_0_1_6"/>
<dbReference type="OrthoDB" id="9807740at2"/>
<dbReference type="Proteomes" id="UP000007794">
    <property type="component" value="Chromosome"/>
</dbReference>
<dbReference type="GO" id="GO:0005737">
    <property type="term" value="C:cytoplasm"/>
    <property type="evidence" value="ECO:0007669"/>
    <property type="project" value="UniProtKB-SubCell"/>
</dbReference>
<dbReference type="GO" id="GO:0004222">
    <property type="term" value="F:metalloendopeptidase activity"/>
    <property type="evidence" value="ECO:0007669"/>
    <property type="project" value="InterPro"/>
</dbReference>
<dbReference type="GO" id="GO:0004521">
    <property type="term" value="F:RNA endonuclease activity"/>
    <property type="evidence" value="ECO:0007669"/>
    <property type="project" value="UniProtKB-UniRule"/>
</dbReference>
<dbReference type="GO" id="GO:0008270">
    <property type="term" value="F:zinc ion binding"/>
    <property type="evidence" value="ECO:0007669"/>
    <property type="project" value="UniProtKB-UniRule"/>
</dbReference>
<dbReference type="GO" id="GO:0006364">
    <property type="term" value="P:rRNA processing"/>
    <property type="evidence" value="ECO:0007669"/>
    <property type="project" value="UniProtKB-UniRule"/>
</dbReference>
<dbReference type="Gene3D" id="3.40.390.30">
    <property type="entry name" value="Metalloproteases ('zincins'), catalytic domain"/>
    <property type="match status" value="1"/>
</dbReference>
<dbReference type="HAMAP" id="MF_00009">
    <property type="entry name" value="Endoribonucl_YbeY"/>
    <property type="match status" value="1"/>
</dbReference>
<dbReference type="InterPro" id="IPR023091">
    <property type="entry name" value="MetalPrtase_cat_dom_sf_prd"/>
</dbReference>
<dbReference type="InterPro" id="IPR002036">
    <property type="entry name" value="YbeY"/>
</dbReference>
<dbReference type="InterPro" id="IPR020549">
    <property type="entry name" value="YbeY_CS"/>
</dbReference>
<dbReference type="NCBIfam" id="TIGR00043">
    <property type="entry name" value="rRNA maturation RNase YbeY"/>
    <property type="match status" value="1"/>
</dbReference>
<dbReference type="PANTHER" id="PTHR46986">
    <property type="entry name" value="ENDORIBONUCLEASE YBEY, CHLOROPLASTIC"/>
    <property type="match status" value="1"/>
</dbReference>
<dbReference type="PANTHER" id="PTHR46986:SF1">
    <property type="entry name" value="ENDORIBONUCLEASE YBEY, CHLOROPLASTIC"/>
    <property type="match status" value="1"/>
</dbReference>
<dbReference type="Pfam" id="PF02130">
    <property type="entry name" value="YbeY"/>
    <property type="match status" value="1"/>
</dbReference>
<dbReference type="SUPFAM" id="SSF55486">
    <property type="entry name" value="Metalloproteases ('zincins'), catalytic domain"/>
    <property type="match status" value="1"/>
</dbReference>
<dbReference type="PROSITE" id="PS01306">
    <property type="entry name" value="UPF0054"/>
    <property type="match status" value="1"/>
</dbReference>
<gene>
    <name evidence="1" type="primary">ybeY</name>
    <name type="ordered locus">BPEN_324</name>
</gene>
<feature type="chain" id="PRO_0000284166" description="Endoribonuclease YbeY">
    <location>
        <begin position="1"/>
        <end position="157"/>
    </location>
</feature>
<feature type="binding site" evidence="1">
    <location>
        <position position="116"/>
    </location>
    <ligand>
        <name>Zn(2+)</name>
        <dbReference type="ChEBI" id="CHEBI:29105"/>
        <note>catalytic</note>
    </ligand>
</feature>
<feature type="binding site" evidence="1">
    <location>
        <position position="120"/>
    </location>
    <ligand>
        <name>Zn(2+)</name>
        <dbReference type="ChEBI" id="CHEBI:29105"/>
        <note>catalytic</note>
    </ligand>
</feature>
<feature type="binding site" evidence="1">
    <location>
        <position position="126"/>
    </location>
    <ligand>
        <name>Zn(2+)</name>
        <dbReference type="ChEBI" id="CHEBI:29105"/>
        <note>catalytic</note>
    </ligand>
</feature>
<name>YBEY_BLOPB</name>
<organism>
    <name type="scientific">Blochmanniella pennsylvanica (strain BPEN)</name>
    <dbReference type="NCBI Taxonomy" id="291272"/>
    <lineage>
        <taxon>Bacteria</taxon>
        <taxon>Pseudomonadati</taxon>
        <taxon>Pseudomonadota</taxon>
        <taxon>Gammaproteobacteria</taxon>
        <taxon>Enterobacterales</taxon>
        <taxon>Enterobacteriaceae</taxon>
        <taxon>ant endosymbionts</taxon>
        <taxon>Candidatus Blochmanniella</taxon>
    </lineage>
</organism>
<sequence length="157" mass="18347">MTSNQVIIDLQLACKNLHGLPNRKMFQSWVSAIFSIYKKKIELTVRIVDIKEMHYLNWYYLKKDCPTNVLSFPFTPPLGMKSPLLGDVVLCRQIIEYESKEKNVPGRSHWAHMIIHGSLHLLGYNHIVDKEAILMQRVERNILQKCGYRTCCHVAHR</sequence>
<reference key="1">
    <citation type="journal article" date="2005" name="Genome Res.">
        <title>Genome sequence of Blochmannia pennsylvanicus indicates parallel evolutionary trends among bacterial mutualists of insects.</title>
        <authorList>
            <person name="Degnan P.H."/>
            <person name="Lazarus A.B."/>
            <person name="Wernegreen J.J."/>
        </authorList>
    </citation>
    <scope>NUCLEOTIDE SEQUENCE [LARGE SCALE GENOMIC DNA]</scope>
    <source>
        <strain>BPEN</strain>
    </source>
</reference>
<comment type="function">
    <text evidence="1">Single strand-specific metallo-endoribonuclease involved in late-stage 70S ribosome quality control and in maturation of the 3' terminus of the 16S rRNA.</text>
</comment>
<comment type="cofactor">
    <cofactor evidence="1">
        <name>Zn(2+)</name>
        <dbReference type="ChEBI" id="CHEBI:29105"/>
    </cofactor>
    <text evidence="1">Binds 1 zinc ion.</text>
</comment>
<comment type="subcellular location">
    <subcellularLocation>
        <location evidence="1">Cytoplasm</location>
    </subcellularLocation>
</comment>
<comment type="similarity">
    <text evidence="1">Belongs to the endoribonuclease YbeY family.</text>
</comment>
<proteinExistence type="inferred from homology"/>